<evidence type="ECO:0000255" key="1">
    <source>
        <dbReference type="HAMAP-Rule" id="MF_01113"/>
    </source>
</evidence>
<dbReference type="EC" id="2.7.7.7" evidence="1"/>
<dbReference type="EMBL" id="CP000853">
    <property type="protein sequence ID" value="ABW19218.1"/>
    <property type="molecule type" value="Genomic_DNA"/>
</dbReference>
<dbReference type="RefSeq" id="WP_012159530.1">
    <property type="nucleotide sequence ID" value="NC_009922.1"/>
</dbReference>
<dbReference type="SMR" id="A8MGJ5"/>
<dbReference type="STRING" id="350688.Clos_1678"/>
<dbReference type="KEGG" id="aoe:Clos_1678"/>
<dbReference type="eggNOG" id="COG0389">
    <property type="taxonomic scope" value="Bacteria"/>
</dbReference>
<dbReference type="HOGENOM" id="CLU_012348_1_1_9"/>
<dbReference type="OrthoDB" id="9808813at2"/>
<dbReference type="Proteomes" id="UP000000269">
    <property type="component" value="Chromosome"/>
</dbReference>
<dbReference type="GO" id="GO:0005829">
    <property type="term" value="C:cytosol"/>
    <property type="evidence" value="ECO:0007669"/>
    <property type="project" value="TreeGrafter"/>
</dbReference>
<dbReference type="GO" id="GO:0003684">
    <property type="term" value="F:damaged DNA binding"/>
    <property type="evidence" value="ECO:0007669"/>
    <property type="project" value="InterPro"/>
</dbReference>
<dbReference type="GO" id="GO:0003887">
    <property type="term" value="F:DNA-directed DNA polymerase activity"/>
    <property type="evidence" value="ECO:0007669"/>
    <property type="project" value="UniProtKB-UniRule"/>
</dbReference>
<dbReference type="GO" id="GO:0000287">
    <property type="term" value="F:magnesium ion binding"/>
    <property type="evidence" value="ECO:0007669"/>
    <property type="project" value="UniProtKB-UniRule"/>
</dbReference>
<dbReference type="GO" id="GO:0006261">
    <property type="term" value="P:DNA-templated DNA replication"/>
    <property type="evidence" value="ECO:0007669"/>
    <property type="project" value="UniProtKB-UniRule"/>
</dbReference>
<dbReference type="GO" id="GO:0042276">
    <property type="term" value="P:error-prone translesion synthesis"/>
    <property type="evidence" value="ECO:0007669"/>
    <property type="project" value="TreeGrafter"/>
</dbReference>
<dbReference type="GO" id="GO:0009432">
    <property type="term" value="P:SOS response"/>
    <property type="evidence" value="ECO:0007669"/>
    <property type="project" value="TreeGrafter"/>
</dbReference>
<dbReference type="CDD" id="cd03586">
    <property type="entry name" value="PolY_Pol_IV_kappa"/>
    <property type="match status" value="1"/>
</dbReference>
<dbReference type="FunFam" id="3.30.1490.100:FF:000004">
    <property type="entry name" value="DNA polymerase IV"/>
    <property type="match status" value="1"/>
</dbReference>
<dbReference type="Gene3D" id="3.30.70.270">
    <property type="match status" value="1"/>
</dbReference>
<dbReference type="Gene3D" id="3.40.1170.60">
    <property type="match status" value="1"/>
</dbReference>
<dbReference type="Gene3D" id="1.10.150.20">
    <property type="entry name" value="5' to 3' exonuclease, C-terminal subdomain"/>
    <property type="match status" value="1"/>
</dbReference>
<dbReference type="Gene3D" id="3.30.1490.100">
    <property type="entry name" value="DNA polymerase, Y-family, little finger domain"/>
    <property type="match status" value="1"/>
</dbReference>
<dbReference type="HAMAP" id="MF_01113">
    <property type="entry name" value="DNApol_IV"/>
    <property type="match status" value="1"/>
</dbReference>
<dbReference type="InterPro" id="IPR043502">
    <property type="entry name" value="DNA/RNA_pol_sf"/>
</dbReference>
<dbReference type="InterPro" id="IPR036775">
    <property type="entry name" value="DNA_pol_Y-fam_lit_finger_sf"/>
</dbReference>
<dbReference type="InterPro" id="IPR017961">
    <property type="entry name" value="DNA_pol_Y-fam_little_finger"/>
</dbReference>
<dbReference type="InterPro" id="IPR050116">
    <property type="entry name" value="DNA_polymerase-Y"/>
</dbReference>
<dbReference type="InterPro" id="IPR022880">
    <property type="entry name" value="DNApol_IV"/>
</dbReference>
<dbReference type="InterPro" id="IPR024728">
    <property type="entry name" value="PolY_HhH_motif"/>
</dbReference>
<dbReference type="InterPro" id="IPR043128">
    <property type="entry name" value="Rev_trsase/Diguanyl_cyclase"/>
</dbReference>
<dbReference type="InterPro" id="IPR001126">
    <property type="entry name" value="UmuC"/>
</dbReference>
<dbReference type="NCBIfam" id="NF002677">
    <property type="entry name" value="PRK02406.1"/>
    <property type="match status" value="1"/>
</dbReference>
<dbReference type="PANTHER" id="PTHR11076">
    <property type="entry name" value="DNA REPAIR POLYMERASE UMUC / TRANSFERASE FAMILY MEMBER"/>
    <property type="match status" value="1"/>
</dbReference>
<dbReference type="PANTHER" id="PTHR11076:SF35">
    <property type="entry name" value="DNA REPAIR PROTEIN HOMOLOG YOBH"/>
    <property type="match status" value="1"/>
</dbReference>
<dbReference type="Pfam" id="PF00817">
    <property type="entry name" value="IMS"/>
    <property type="match status" value="1"/>
</dbReference>
<dbReference type="Pfam" id="PF11799">
    <property type="entry name" value="IMS_C"/>
    <property type="match status" value="1"/>
</dbReference>
<dbReference type="Pfam" id="PF11798">
    <property type="entry name" value="IMS_HHH"/>
    <property type="match status" value="1"/>
</dbReference>
<dbReference type="SUPFAM" id="SSF56672">
    <property type="entry name" value="DNA/RNA polymerases"/>
    <property type="match status" value="1"/>
</dbReference>
<dbReference type="SUPFAM" id="SSF100879">
    <property type="entry name" value="Lesion bypass DNA polymerase (Y-family), little finger domain"/>
    <property type="match status" value="1"/>
</dbReference>
<dbReference type="PROSITE" id="PS50173">
    <property type="entry name" value="UMUC"/>
    <property type="match status" value="1"/>
</dbReference>
<organism>
    <name type="scientific">Alkaliphilus oremlandii (strain OhILAs)</name>
    <name type="common">Clostridium oremlandii (strain OhILAs)</name>
    <dbReference type="NCBI Taxonomy" id="350688"/>
    <lineage>
        <taxon>Bacteria</taxon>
        <taxon>Bacillati</taxon>
        <taxon>Bacillota</taxon>
        <taxon>Clostridia</taxon>
        <taxon>Peptostreptococcales</taxon>
        <taxon>Natronincolaceae</taxon>
        <taxon>Alkaliphilus</taxon>
    </lineage>
</organism>
<reference key="1">
    <citation type="submission" date="2007-10" db="EMBL/GenBank/DDBJ databases">
        <title>Complete genome of Alkaliphilus oremlandii OhILAs.</title>
        <authorList>
            <person name="Copeland A."/>
            <person name="Lucas S."/>
            <person name="Lapidus A."/>
            <person name="Barry K."/>
            <person name="Detter J.C."/>
            <person name="Glavina del Rio T."/>
            <person name="Hammon N."/>
            <person name="Israni S."/>
            <person name="Dalin E."/>
            <person name="Tice H."/>
            <person name="Pitluck S."/>
            <person name="Chain P."/>
            <person name="Malfatti S."/>
            <person name="Shin M."/>
            <person name="Vergez L."/>
            <person name="Schmutz J."/>
            <person name="Larimer F."/>
            <person name="Land M."/>
            <person name="Hauser L."/>
            <person name="Kyrpides N."/>
            <person name="Mikhailova N."/>
            <person name="Stolz J.F."/>
            <person name="Dawson A."/>
            <person name="Fisher E."/>
            <person name="Crable B."/>
            <person name="Perera E."/>
            <person name="Lisak J."/>
            <person name="Ranganathan M."/>
            <person name="Basu P."/>
            <person name="Richardson P."/>
        </authorList>
    </citation>
    <scope>NUCLEOTIDE SEQUENCE [LARGE SCALE GENOMIC DNA]</scope>
    <source>
        <strain>OhILAs</strain>
    </source>
</reference>
<proteinExistence type="inferred from homology"/>
<gene>
    <name evidence="1" type="primary">dinB</name>
    <name type="ordered locus">Clos_1678</name>
</gene>
<feature type="chain" id="PRO_1000084877" description="DNA polymerase IV">
    <location>
        <begin position="1"/>
        <end position="398"/>
    </location>
</feature>
<feature type="domain" description="UmuC" evidence="1">
    <location>
        <begin position="5"/>
        <end position="187"/>
    </location>
</feature>
<feature type="active site" evidence="1">
    <location>
        <position position="106"/>
    </location>
</feature>
<feature type="binding site" evidence="1">
    <location>
        <position position="9"/>
    </location>
    <ligand>
        <name>Mg(2+)</name>
        <dbReference type="ChEBI" id="CHEBI:18420"/>
    </ligand>
</feature>
<feature type="binding site" evidence="1">
    <location>
        <position position="105"/>
    </location>
    <ligand>
        <name>Mg(2+)</name>
        <dbReference type="ChEBI" id="CHEBI:18420"/>
    </ligand>
</feature>
<feature type="site" description="Substrate discrimination" evidence="1">
    <location>
        <position position="14"/>
    </location>
</feature>
<accession>A8MGJ5</accession>
<comment type="function">
    <text evidence="1">Poorly processive, error-prone DNA polymerase involved in untargeted mutagenesis. Copies undamaged DNA at stalled replication forks, which arise in vivo from mismatched or misaligned primer ends. These misaligned primers can be extended by PolIV. Exhibits no 3'-5' exonuclease (proofreading) activity. May be involved in translesional synthesis, in conjunction with the beta clamp from PolIII.</text>
</comment>
<comment type="catalytic activity">
    <reaction evidence="1">
        <text>DNA(n) + a 2'-deoxyribonucleoside 5'-triphosphate = DNA(n+1) + diphosphate</text>
        <dbReference type="Rhea" id="RHEA:22508"/>
        <dbReference type="Rhea" id="RHEA-COMP:17339"/>
        <dbReference type="Rhea" id="RHEA-COMP:17340"/>
        <dbReference type="ChEBI" id="CHEBI:33019"/>
        <dbReference type="ChEBI" id="CHEBI:61560"/>
        <dbReference type="ChEBI" id="CHEBI:173112"/>
        <dbReference type="EC" id="2.7.7.7"/>
    </reaction>
</comment>
<comment type="cofactor">
    <cofactor evidence="1">
        <name>Mg(2+)</name>
        <dbReference type="ChEBI" id="CHEBI:18420"/>
    </cofactor>
    <text evidence="1">Binds 2 magnesium ions per subunit.</text>
</comment>
<comment type="subunit">
    <text evidence="1">Monomer.</text>
</comment>
<comment type="subcellular location">
    <subcellularLocation>
        <location evidence="1">Cytoplasm</location>
    </subcellularLocation>
</comment>
<comment type="similarity">
    <text evidence="1">Belongs to the DNA polymerase type-Y family.</text>
</comment>
<name>DPO4_ALKOO</name>
<sequence length="398" mass="44741">MNPVIFLVDMNAFFISCEMTRNSKLIGIPAAVAGNPQNRTGIVLAANYEARRFGVKTAMTLNNALKLCPTMTVVPPDHRFYRQKSSEVMNLLSKYTPIIEQSSIDEAWLDMTGTENLFGKPADAAKLIMEDIKENLGLWCSIGISEGKFLSKMASDMKKPLGITELWKRDIQTKLWPLSIKSMHGVGAKTYEKLHSLGIETIGDFANLKKDDAHQILGKFGLDLYHHAHGIDTTPVQVISPDDMKSIGRSTTLPEDLVDIEQLKYILLTLCEDIGRSARKHNKRGRTVNLTLKSSDFKVIHRQVTIKATFNTMEIYEAGYHLLKLHLNPKIPIRLIGVSISGFEDTSVPEQISIFNMDEFNKRDTIGNNRNEKIDMVMDSIRNKYGSDKISRASLIIK</sequence>
<keyword id="KW-0963">Cytoplasm</keyword>
<keyword id="KW-0227">DNA damage</keyword>
<keyword id="KW-0234">DNA repair</keyword>
<keyword id="KW-0235">DNA replication</keyword>
<keyword id="KW-0238">DNA-binding</keyword>
<keyword id="KW-0239">DNA-directed DNA polymerase</keyword>
<keyword id="KW-0460">Magnesium</keyword>
<keyword id="KW-0479">Metal-binding</keyword>
<keyword id="KW-0515">Mutator protein</keyword>
<keyword id="KW-0548">Nucleotidyltransferase</keyword>
<keyword id="KW-1185">Reference proteome</keyword>
<keyword id="KW-0808">Transferase</keyword>
<protein>
    <recommendedName>
        <fullName evidence="1">DNA polymerase IV</fullName>
        <shortName evidence="1">Pol IV</shortName>
        <ecNumber evidence="1">2.7.7.7</ecNumber>
    </recommendedName>
</protein>